<reference key="1">
    <citation type="submission" date="2003-06" db="EMBL/GenBank/DDBJ databases">
        <title>The complete genome sequence of Haemophilus ducreyi.</title>
        <authorList>
            <person name="Munson R.S. Jr."/>
            <person name="Ray W.C."/>
            <person name="Mahairas G."/>
            <person name="Sabo P."/>
            <person name="Mungur R."/>
            <person name="Johnson L."/>
            <person name="Nguyen D."/>
            <person name="Wang J."/>
            <person name="Forst C."/>
            <person name="Hood L."/>
        </authorList>
    </citation>
    <scope>NUCLEOTIDE SEQUENCE [LARGE SCALE GENOMIC DNA]</scope>
    <source>
        <strain>35000HP / ATCC 700724</strain>
    </source>
</reference>
<feature type="chain" id="PRO_0000180141" description="Acyl carrier protein">
    <location>
        <begin position="1"/>
        <end position="77"/>
    </location>
</feature>
<feature type="domain" description="Carrier" evidence="2">
    <location>
        <begin position="1"/>
        <end position="76"/>
    </location>
</feature>
<feature type="modified residue" description="O-(pantetheine 4'-phosphoryl)serine" evidence="2">
    <location>
        <position position="36"/>
    </location>
</feature>
<name>ACP_HAEDU</name>
<protein>
    <recommendedName>
        <fullName evidence="1">Acyl carrier protein</fullName>
        <shortName evidence="1">ACP</shortName>
    </recommendedName>
</protein>
<comment type="function">
    <text evidence="1">Carrier of the growing fatty acid chain in fatty acid biosynthesis.</text>
</comment>
<comment type="pathway">
    <text evidence="1">Lipid metabolism; fatty acid biosynthesis.</text>
</comment>
<comment type="subcellular location">
    <subcellularLocation>
        <location evidence="1">Cytoplasm</location>
    </subcellularLocation>
</comment>
<comment type="PTM">
    <text evidence="1">4'-phosphopantetheine is transferred from CoA to a specific serine of apo-ACP by AcpS. This modification is essential for activity because fatty acids are bound in thioester linkage to the sulfhydryl of the prosthetic group.</text>
</comment>
<comment type="similarity">
    <text evidence="1">Belongs to the acyl carrier protein (ACP) family.</text>
</comment>
<keyword id="KW-0963">Cytoplasm</keyword>
<keyword id="KW-0275">Fatty acid biosynthesis</keyword>
<keyword id="KW-0276">Fatty acid metabolism</keyword>
<keyword id="KW-0444">Lipid biosynthesis</keyword>
<keyword id="KW-0443">Lipid metabolism</keyword>
<keyword id="KW-0596">Phosphopantetheine</keyword>
<keyword id="KW-0597">Phosphoprotein</keyword>
<keyword id="KW-1185">Reference proteome</keyword>
<organism>
    <name type="scientific">Haemophilus ducreyi (strain 35000HP / ATCC 700724)</name>
    <dbReference type="NCBI Taxonomy" id="233412"/>
    <lineage>
        <taxon>Bacteria</taxon>
        <taxon>Pseudomonadati</taxon>
        <taxon>Pseudomonadota</taxon>
        <taxon>Gammaproteobacteria</taxon>
        <taxon>Pasteurellales</taxon>
        <taxon>Pasteurellaceae</taxon>
        <taxon>Haemophilus</taxon>
    </lineage>
</organism>
<dbReference type="EMBL" id="AE017143">
    <property type="protein sequence ID" value="AAP96652.1"/>
    <property type="molecule type" value="Genomic_DNA"/>
</dbReference>
<dbReference type="RefSeq" id="WP_010945679.1">
    <property type="nucleotide sequence ID" value="NC_002940.2"/>
</dbReference>
<dbReference type="SMR" id="Q7VKH6"/>
<dbReference type="STRING" id="233412.HD_1931"/>
<dbReference type="KEGG" id="hdu:HD_1931"/>
<dbReference type="eggNOG" id="COG0236">
    <property type="taxonomic scope" value="Bacteria"/>
</dbReference>
<dbReference type="HOGENOM" id="CLU_108696_5_1_6"/>
<dbReference type="OrthoDB" id="9804551at2"/>
<dbReference type="UniPathway" id="UPA00094"/>
<dbReference type="Proteomes" id="UP000001022">
    <property type="component" value="Chromosome"/>
</dbReference>
<dbReference type="GO" id="GO:0005829">
    <property type="term" value="C:cytosol"/>
    <property type="evidence" value="ECO:0007669"/>
    <property type="project" value="TreeGrafter"/>
</dbReference>
<dbReference type="GO" id="GO:0016020">
    <property type="term" value="C:membrane"/>
    <property type="evidence" value="ECO:0007669"/>
    <property type="project" value="GOC"/>
</dbReference>
<dbReference type="GO" id="GO:0000035">
    <property type="term" value="F:acyl binding"/>
    <property type="evidence" value="ECO:0007669"/>
    <property type="project" value="TreeGrafter"/>
</dbReference>
<dbReference type="GO" id="GO:0000036">
    <property type="term" value="F:acyl carrier activity"/>
    <property type="evidence" value="ECO:0007669"/>
    <property type="project" value="UniProtKB-UniRule"/>
</dbReference>
<dbReference type="GO" id="GO:0031177">
    <property type="term" value="F:phosphopantetheine binding"/>
    <property type="evidence" value="ECO:0007669"/>
    <property type="project" value="InterPro"/>
</dbReference>
<dbReference type="GO" id="GO:0009245">
    <property type="term" value="P:lipid A biosynthetic process"/>
    <property type="evidence" value="ECO:0007669"/>
    <property type="project" value="TreeGrafter"/>
</dbReference>
<dbReference type="FunFam" id="1.10.1200.10:FF:000001">
    <property type="entry name" value="Acyl carrier protein"/>
    <property type="match status" value="1"/>
</dbReference>
<dbReference type="Gene3D" id="1.10.1200.10">
    <property type="entry name" value="ACP-like"/>
    <property type="match status" value="1"/>
</dbReference>
<dbReference type="HAMAP" id="MF_01217">
    <property type="entry name" value="Acyl_carrier"/>
    <property type="match status" value="1"/>
</dbReference>
<dbReference type="InterPro" id="IPR003231">
    <property type="entry name" value="ACP"/>
</dbReference>
<dbReference type="InterPro" id="IPR036736">
    <property type="entry name" value="ACP-like_sf"/>
</dbReference>
<dbReference type="InterPro" id="IPR020806">
    <property type="entry name" value="PKS_PP-bd"/>
</dbReference>
<dbReference type="InterPro" id="IPR009081">
    <property type="entry name" value="PP-bd_ACP"/>
</dbReference>
<dbReference type="InterPro" id="IPR006162">
    <property type="entry name" value="Ppantetheine_attach_site"/>
</dbReference>
<dbReference type="NCBIfam" id="TIGR00517">
    <property type="entry name" value="acyl_carrier"/>
    <property type="match status" value="1"/>
</dbReference>
<dbReference type="NCBIfam" id="NF002148">
    <property type="entry name" value="PRK00982.1-2"/>
    <property type="match status" value="1"/>
</dbReference>
<dbReference type="NCBIfam" id="NF002149">
    <property type="entry name" value="PRK00982.1-3"/>
    <property type="match status" value="1"/>
</dbReference>
<dbReference type="NCBIfam" id="NF002150">
    <property type="entry name" value="PRK00982.1-4"/>
    <property type="match status" value="1"/>
</dbReference>
<dbReference type="NCBIfam" id="NF002151">
    <property type="entry name" value="PRK00982.1-5"/>
    <property type="match status" value="1"/>
</dbReference>
<dbReference type="PANTHER" id="PTHR20863">
    <property type="entry name" value="ACYL CARRIER PROTEIN"/>
    <property type="match status" value="1"/>
</dbReference>
<dbReference type="PANTHER" id="PTHR20863:SF76">
    <property type="entry name" value="CARRIER DOMAIN-CONTAINING PROTEIN"/>
    <property type="match status" value="1"/>
</dbReference>
<dbReference type="Pfam" id="PF00550">
    <property type="entry name" value="PP-binding"/>
    <property type="match status" value="1"/>
</dbReference>
<dbReference type="SMART" id="SM00823">
    <property type="entry name" value="PKS_PP"/>
    <property type="match status" value="1"/>
</dbReference>
<dbReference type="SUPFAM" id="SSF47336">
    <property type="entry name" value="ACP-like"/>
    <property type="match status" value="1"/>
</dbReference>
<dbReference type="PROSITE" id="PS50075">
    <property type="entry name" value="CARRIER"/>
    <property type="match status" value="1"/>
</dbReference>
<dbReference type="PROSITE" id="PS00012">
    <property type="entry name" value="PHOSPHOPANTETHEINE"/>
    <property type="match status" value="1"/>
</dbReference>
<sequence length="77" mass="8497">MSIEERVKKIIVDQLGVKAEDVKPEASFIEDLGADSLDTVELVMALEEEFDIEIPDEEAEKITTVQSAIDYVAKANA</sequence>
<proteinExistence type="inferred from homology"/>
<gene>
    <name evidence="1" type="primary">acpP</name>
    <name type="ordered locus">HD_1931</name>
</gene>
<accession>Q7VKH6</accession>
<evidence type="ECO:0000255" key="1">
    <source>
        <dbReference type="HAMAP-Rule" id="MF_01217"/>
    </source>
</evidence>
<evidence type="ECO:0000255" key="2">
    <source>
        <dbReference type="PROSITE-ProRule" id="PRU00258"/>
    </source>
</evidence>